<proteinExistence type="inferred from homology"/>
<name>MURJ_AQUAE</name>
<sequence>MPSLFRASLLFSLGILLSRIFGYVRDATVAYYFGASAVSDAFFIAFRIPNAFRRIFGEGGFNAVFIPFYGEAVKQNREEEFLRKTFGLLITFSLSVVIIGLLFPEEIISVISPGIKEKETFSYAVEFLKFTILYLPLVSFYAYSMAILLVQGKFFVPSVSQTLFNLGFILSLVILFHTLGHYSLALAVLIGGLFQIIPNTFLLFKEKLLKIPKFSLDREIKTFLKKFLFTLGGFSANQLSLFVDTFLASFLKVGSISYVYYAARIYLLPISLFSISLSNTLLALVSTKKDKEKDTDTALKLTLMLSIPSSFGLFFLSREIVSVLYKRGNFSEEDLFYTSGLLSLYAFSVPFYSLQHILKTVYYSKKNVEIPTKSAFLSVFLEALFGSVFIFLLNFGVYSFPLAALISSSSVLVYLYQKLPQKVSIPFGNLIKYLIASSFMGGLVYLTESLTQNPFILVSFIPIYALFYYVFLIILREELAILISYGIFRRGKILQRESN</sequence>
<reference key="1">
    <citation type="journal article" date="1998" name="Nature">
        <title>The complete genome of the hyperthermophilic bacterium Aquifex aeolicus.</title>
        <authorList>
            <person name="Deckert G."/>
            <person name="Warren P.V."/>
            <person name="Gaasterland T."/>
            <person name="Young W.G."/>
            <person name="Lenox A.L."/>
            <person name="Graham D.E."/>
            <person name="Overbeek R."/>
            <person name="Snead M.A."/>
            <person name="Keller M."/>
            <person name="Aujay M."/>
            <person name="Huber R."/>
            <person name="Feldman R.A."/>
            <person name="Short J.M."/>
            <person name="Olsen G.J."/>
            <person name="Swanson R.V."/>
        </authorList>
    </citation>
    <scope>NUCLEOTIDE SEQUENCE [LARGE SCALE GENOMIC DNA]</scope>
    <source>
        <strain>VF5</strain>
    </source>
</reference>
<protein>
    <recommendedName>
        <fullName evidence="1">Probable lipid II flippase MurJ</fullName>
    </recommendedName>
</protein>
<organism>
    <name type="scientific">Aquifex aeolicus (strain VF5)</name>
    <dbReference type="NCBI Taxonomy" id="224324"/>
    <lineage>
        <taxon>Bacteria</taxon>
        <taxon>Pseudomonadati</taxon>
        <taxon>Aquificota</taxon>
        <taxon>Aquificia</taxon>
        <taxon>Aquificales</taxon>
        <taxon>Aquificaceae</taxon>
        <taxon>Aquifex</taxon>
    </lineage>
</organism>
<keyword id="KW-0997">Cell inner membrane</keyword>
<keyword id="KW-1003">Cell membrane</keyword>
<keyword id="KW-0133">Cell shape</keyword>
<keyword id="KW-0961">Cell wall biogenesis/degradation</keyword>
<keyword id="KW-0472">Membrane</keyword>
<keyword id="KW-0573">Peptidoglycan synthesis</keyword>
<keyword id="KW-1185">Reference proteome</keyword>
<keyword id="KW-0812">Transmembrane</keyword>
<keyword id="KW-1133">Transmembrane helix</keyword>
<keyword id="KW-0813">Transport</keyword>
<dbReference type="EMBL" id="AE000657">
    <property type="protein sequence ID" value="AAC07622.1"/>
    <property type="molecule type" value="Genomic_DNA"/>
</dbReference>
<dbReference type="PIR" id="H70453">
    <property type="entry name" value="H70453"/>
</dbReference>
<dbReference type="RefSeq" id="NP_214224.1">
    <property type="nucleotide sequence ID" value="NC_000918.1"/>
</dbReference>
<dbReference type="RefSeq" id="WP_010881161.1">
    <property type="nucleotide sequence ID" value="NC_000918.1"/>
</dbReference>
<dbReference type="SMR" id="O67658"/>
<dbReference type="FunCoup" id="O67658">
    <property type="interactions" value="255"/>
</dbReference>
<dbReference type="STRING" id="224324.aq_1789"/>
<dbReference type="EnsemblBacteria" id="AAC07622">
    <property type="protein sequence ID" value="AAC07622"/>
    <property type="gene ID" value="aq_1789"/>
</dbReference>
<dbReference type="KEGG" id="aae:aq_1789"/>
<dbReference type="PATRIC" id="fig|224324.8.peg.1381"/>
<dbReference type="eggNOG" id="COG0728">
    <property type="taxonomic scope" value="Bacteria"/>
</dbReference>
<dbReference type="HOGENOM" id="CLU_006797_5_0_0"/>
<dbReference type="InParanoid" id="O67658"/>
<dbReference type="OrthoDB" id="9804143at2"/>
<dbReference type="UniPathway" id="UPA00219"/>
<dbReference type="Proteomes" id="UP000000798">
    <property type="component" value="Chromosome"/>
</dbReference>
<dbReference type="GO" id="GO:0005886">
    <property type="term" value="C:plasma membrane"/>
    <property type="evidence" value="ECO:0000318"/>
    <property type="project" value="GO_Central"/>
</dbReference>
<dbReference type="GO" id="GO:0015648">
    <property type="term" value="F:lipid-linked peptidoglycan transporter activity"/>
    <property type="evidence" value="ECO:0000318"/>
    <property type="project" value="GO_Central"/>
</dbReference>
<dbReference type="GO" id="GO:0071555">
    <property type="term" value="P:cell wall organization"/>
    <property type="evidence" value="ECO:0007669"/>
    <property type="project" value="UniProtKB-KW"/>
</dbReference>
<dbReference type="GO" id="GO:0034204">
    <property type="term" value="P:lipid translocation"/>
    <property type="evidence" value="ECO:0000318"/>
    <property type="project" value="GO_Central"/>
</dbReference>
<dbReference type="GO" id="GO:0015836">
    <property type="term" value="P:lipid-linked peptidoglycan transport"/>
    <property type="evidence" value="ECO:0000318"/>
    <property type="project" value="GO_Central"/>
</dbReference>
<dbReference type="GO" id="GO:0009252">
    <property type="term" value="P:peptidoglycan biosynthetic process"/>
    <property type="evidence" value="ECO:0000318"/>
    <property type="project" value="GO_Central"/>
</dbReference>
<dbReference type="GO" id="GO:0008360">
    <property type="term" value="P:regulation of cell shape"/>
    <property type="evidence" value="ECO:0007669"/>
    <property type="project" value="UniProtKB-KW"/>
</dbReference>
<dbReference type="CDD" id="cd13123">
    <property type="entry name" value="MATE_MurJ_like"/>
    <property type="match status" value="1"/>
</dbReference>
<dbReference type="HAMAP" id="MF_02078">
    <property type="entry name" value="MurJ_MviN"/>
    <property type="match status" value="1"/>
</dbReference>
<dbReference type="InterPro" id="IPR051050">
    <property type="entry name" value="Lipid_II_flippase_MurJ/MviN"/>
</dbReference>
<dbReference type="InterPro" id="IPR004268">
    <property type="entry name" value="MurJ"/>
</dbReference>
<dbReference type="NCBIfam" id="TIGR01695">
    <property type="entry name" value="murJ_mviN"/>
    <property type="match status" value="1"/>
</dbReference>
<dbReference type="PANTHER" id="PTHR47019">
    <property type="entry name" value="LIPID II FLIPPASE MURJ"/>
    <property type="match status" value="1"/>
</dbReference>
<dbReference type="PANTHER" id="PTHR47019:SF1">
    <property type="entry name" value="LIPID II FLIPPASE MURJ"/>
    <property type="match status" value="1"/>
</dbReference>
<dbReference type="Pfam" id="PF03023">
    <property type="entry name" value="MurJ"/>
    <property type="match status" value="1"/>
</dbReference>
<dbReference type="PIRSF" id="PIRSF002869">
    <property type="entry name" value="MviN"/>
    <property type="match status" value="1"/>
</dbReference>
<dbReference type="PRINTS" id="PR01806">
    <property type="entry name" value="VIRFACTRMVIN"/>
</dbReference>
<feature type="chain" id="PRO_0000181997" description="Probable lipid II flippase MurJ">
    <location>
        <begin position="1"/>
        <end position="499"/>
    </location>
</feature>
<feature type="transmembrane region" description="Helical" evidence="1">
    <location>
        <begin position="4"/>
        <end position="24"/>
    </location>
</feature>
<feature type="transmembrane region" description="Helical" evidence="1">
    <location>
        <begin position="26"/>
        <end position="46"/>
    </location>
</feature>
<feature type="transmembrane region" description="Helical" evidence="1">
    <location>
        <begin position="88"/>
        <end position="108"/>
    </location>
</feature>
<feature type="transmembrane region" description="Helical" evidence="1">
    <location>
        <begin position="130"/>
        <end position="150"/>
    </location>
</feature>
<feature type="transmembrane region" description="Helical" evidence="1">
    <location>
        <begin position="154"/>
        <end position="174"/>
    </location>
</feature>
<feature type="transmembrane region" description="Helical" evidence="1">
    <location>
        <begin position="184"/>
        <end position="204"/>
    </location>
</feature>
<feature type="transmembrane region" description="Helical" evidence="1">
    <location>
        <begin position="227"/>
        <end position="247"/>
    </location>
</feature>
<feature type="transmembrane region" description="Helical" evidence="1">
    <location>
        <begin position="265"/>
        <end position="285"/>
    </location>
</feature>
<feature type="transmembrane region" description="Helical" evidence="1">
    <location>
        <begin position="297"/>
        <end position="317"/>
    </location>
</feature>
<feature type="transmembrane region" description="Helical" evidence="1">
    <location>
        <begin position="335"/>
        <end position="355"/>
    </location>
</feature>
<feature type="transmembrane region" description="Helical" evidence="1">
    <location>
        <begin position="375"/>
        <end position="395"/>
    </location>
</feature>
<feature type="transmembrane region" description="Helical" evidence="1">
    <location>
        <begin position="396"/>
        <end position="416"/>
    </location>
</feature>
<feature type="transmembrane region" description="Helical" evidence="1">
    <location>
        <begin position="425"/>
        <end position="445"/>
    </location>
</feature>
<feature type="transmembrane region" description="Helical" evidence="1">
    <location>
        <begin position="455"/>
        <end position="475"/>
    </location>
</feature>
<evidence type="ECO:0000255" key="1">
    <source>
        <dbReference type="HAMAP-Rule" id="MF_02078"/>
    </source>
</evidence>
<gene>
    <name evidence="1" type="primary">murJ</name>
    <name type="synonym">mviN</name>
    <name type="ordered locus">aq_1789</name>
</gene>
<accession>O67658</accession>
<comment type="function">
    <text evidence="1">Involved in peptidoglycan biosynthesis. Transports lipid-linked peptidoglycan precursors from the inner to the outer leaflet of the cytoplasmic membrane.</text>
</comment>
<comment type="pathway">
    <text evidence="1">Cell wall biogenesis; peptidoglycan biosynthesis.</text>
</comment>
<comment type="subcellular location">
    <subcellularLocation>
        <location evidence="1">Cell inner membrane</location>
        <topology evidence="1">Multi-pass membrane protein</topology>
    </subcellularLocation>
</comment>
<comment type="similarity">
    <text evidence="1">Belongs to the MurJ/MviN family.</text>
</comment>